<reference key="1">
    <citation type="journal article" date="2007" name="J. Bacteriol.">
        <title>The complete genome sequence of Bacillus thuringiensis Al Hakam.</title>
        <authorList>
            <person name="Challacombe J.F."/>
            <person name="Altherr M.R."/>
            <person name="Xie G."/>
            <person name="Bhotika S.S."/>
            <person name="Brown N."/>
            <person name="Bruce D."/>
            <person name="Campbell C.S."/>
            <person name="Campbell M.L."/>
            <person name="Chen J."/>
            <person name="Chertkov O."/>
            <person name="Cleland C."/>
            <person name="Dimitrijevic M."/>
            <person name="Doggett N.A."/>
            <person name="Fawcett J.J."/>
            <person name="Glavina T."/>
            <person name="Goodwin L.A."/>
            <person name="Green L.D."/>
            <person name="Han C.S."/>
            <person name="Hill K.K."/>
            <person name="Hitchcock P."/>
            <person name="Jackson P.J."/>
            <person name="Keim P."/>
            <person name="Kewalramani A.R."/>
            <person name="Longmire J."/>
            <person name="Lucas S."/>
            <person name="Malfatti S."/>
            <person name="Martinez D."/>
            <person name="McMurry K."/>
            <person name="Meincke L.J."/>
            <person name="Misra M."/>
            <person name="Moseman B.L."/>
            <person name="Mundt M."/>
            <person name="Munk A.C."/>
            <person name="Okinaka R.T."/>
            <person name="Parson-Quintana B."/>
            <person name="Reilly L.P."/>
            <person name="Richardson P."/>
            <person name="Robinson D.L."/>
            <person name="Saunders E."/>
            <person name="Tapia R."/>
            <person name="Tesmer J.G."/>
            <person name="Thayer N."/>
            <person name="Thompson L.S."/>
            <person name="Tice H."/>
            <person name="Ticknor L.O."/>
            <person name="Wills P.L."/>
            <person name="Gilna P."/>
            <person name="Brettin T.S."/>
        </authorList>
    </citation>
    <scope>NUCLEOTIDE SEQUENCE [LARGE SCALE GENOMIC DNA]</scope>
    <source>
        <strain>Al Hakam</strain>
    </source>
</reference>
<sequence length="355" mass="40885">MNQVRKWNIIGGRVIKTGIAVFLTVLVCEFFNIPTIFAVITAIVTIEPTATDSIKKGLVRFPASTIGSAYAMTFTFFLGHQALSYALAAMFTIVTCQKLRLHAGTLVATLTAVAMIPITADHYFTAFLIRLATTSTGIIVSTVVNFFILPPHYVKTISGCTEELFVKTANVMEEWLTALMDGKVIKKETTYNLSKLTVLLHKAVQFVQYEQKDWKYHRHTKKEMRSFLLVQKQLHLLQQIIYHIDNLARAPIETCDWSQNEKEILRRTIHSIISILRNYCEKIDEEHFKLIDELDKQFWTNKNDLAHCKPNQYHHHFSSESIILFEVLSIHDMLEELKQIFEKYESENQLNCSVH</sequence>
<evidence type="ECO:0000255" key="1"/>
<evidence type="ECO:0000305" key="2"/>
<dbReference type="EMBL" id="CP000485">
    <property type="protein sequence ID" value="ABK85755.1"/>
    <property type="status" value="ALT_INIT"/>
    <property type="molecule type" value="Genomic_DNA"/>
</dbReference>
<dbReference type="RefSeq" id="WP_001077661.1">
    <property type="nucleotide sequence ID" value="NC_008600.1"/>
</dbReference>
<dbReference type="SMR" id="A0REW2"/>
<dbReference type="KEGG" id="btl:BALH_2468"/>
<dbReference type="HOGENOM" id="CLU_067028_0_0_9"/>
<dbReference type="GO" id="GO:0005886">
    <property type="term" value="C:plasma membrane"/>
    <property type="evidence" value="ECO:0007669"/>
    <property type="project" value="UniProtKB-SubCell"/>
</dbReference>
<dbReference type="InterPro" id="IPR010343">
    <property type="entry name" value="ArAE_1"/>
</dbReference>
<dbReference type="PANTHER" id="PTHR30509:SF9">
    <property type="entry name" value="MULTIDRUG RESISTANCE PROTEIN MDTO"/>
    <property type="match status" value="1"/>
</dbReference>
<dbReference type="PANTHER" id="PTHR30509">
    <property type="entry name" value="P-HYDROXYBENZOIC ACID EFFLUX PUMP SUBUNIT-RELATED"/>
    <property type="match status" value="1"/>
</dbReference>
<dbReference type="Pfam" id="PF06081">
    <property type="entry name" value="ArAE_1"/>
    <property type="match status" value="1"/>
</dbReference>
<keyword id="KW-1003">Cell membrane</keyword>
<keyword id="KW-0472">Membrane</keyword>
<keyword id="KW-0812">Transmembrane</keyword>
<keyword id="KW-1133">Transmembrane helix</keyword>
<accession>A0REW2</accession>
<proteinExistence type="inferred from homology"/>
<gene>
    <name type="ordered locus">BALH_2468</name>
</gene>
<name>Y2468_BACAH</name>
<organism>
    <name type="scientific">Bacillus thuringiensis (strain Al Hakam)</name>
    <dbReference type="NCBI Taxonomy" id="412694"/>
    <lineage>
        <taxon>Bacteria</taxon>
        <taxon>Bacillati</taxon>
        <taxon>Bacillota</taxon>
        <taxon>Bacilli</taxon>
        <taxon>Bacillales</taxon>
        <taxon>Bacillaceae</taxon>
        <taxon>Bacillus</taxon>
        <taxon>Bacillus cereus group</taxon>
    </lineage>
</organism>
<protein>
    <recommendedName>
        <fullName>UPF0421 protein BALH_2468</fullName>
    </recommendedName>
</protein>
<feature type="chain" id="PRO_0000283005" description="UPF0421 protein BALH_2468">
    <location>
        <begin position="1"/>
        <end position="355"/>
    </location>
</feature>
<feature type="transmembrane region" description="Helical" evidence="1">
    <location>
        <begin position="19"/>
        <end position="39"/>
    </location>
</feature>
<feature type="transmembrane region" description="Helical" evidence="1">
    <location>
        <begin position="74"/>
        <end position="94"/>
    </location>
</feature>
<feature type="transmembrane region" description="Helical" evidence="1">
    <location>
        <begin position="109"/>
        <end position="129"/>
    </location>
</feature>
<feature type="transmembrane region" description="Helical" evidence="1">
    <location>
        <begin position="131"/>
        <end position="151"/>
    </location>
</feature>
<comment type="subcellular location">
    <subcellularLocation>
        <location evidence="2">Cell membrane</location>
        <topology evidence="2">Multi-pass membrane protein</topology>
    </subcellularLocation>
</comment>
<comment type="similarity">
    <text evidence="2">Belongs to the UPF0421 family.</text>
</comment>
<comment type="sequence caution" evidence="2">
    <conflict type="erroneous initiation">
        <sequence resource="EMBL-CDS" id="ABK85755"/>
    </conflict>
</comment>